<proteinExistence type="evidence at protein level"/>
<organism>
    <name type="scientific">Homo sapiens</name>
    <name type="common">Human</name>
    <dbReference type="NCBI Taxonomy" id="9606"/>
    <lineage>
        <taxon>Eukaryota</taxon>
        <taxon>Metazoa</taxon>
        <taxon>Chordata</taxon>
        <taxon>Craniata</taxon>
        <taxon>Vertebrata</taxon>
        <taxon>Euteleostomi</taxon>
        <taxon>Mammalia</taxon>
        <taxon>Eutheria</taxon>
        <taxon>Euarchontoglires</taxon>
        <taxon>Primates</taxon>
        <taxon>Haplorrhini</taxon>
        <taxon>Catarrhini</taxon>
        <taxon>Hominidae</taxon>
        <taxon>Homo</taxon>
    </lineage>
</organism>
<feature type="signal peptide" evidence="2">
    <location>
        <begin position="1"/>
        <end position="20"/>
    </location>
</feature>
<feature type="chain" id="PRO_0000317518" description="Lipocalin-15">
    <location>
        <begin position="21"/>
        <end position="184"/>
    </location>
</feature>
<feature type="disulfide bond" evidence="1">
    <location>
        <begin position="83"/>
        <end position="176"/>
    </location>
</feature>
<feature type="sequence variant" id="VAR_059453" description="In dbSNP:rs2297723.">
    <original>S</original>
    <variation>A</variation>
    <location>
        <position position="152"/>
    </location>
</feature>
<feature type="sequence variant" id="VAR_059454" description="In dbSNP:rs2297722.">
    <original>K</original>
    <variation>E</variation>
    <location>
        <position position="164"/>
    </location>
</feature>
<feature type="turn" evidence="4">
    <location>
        <begin position="30"/>
        <end position="33"/>
    </location>
</feature>
<feature type="strand" evidence="4">
    <location>
        <begin position="35"/>
        <end position="44"/>
    </location>
</feature>
<feature type="helix" evidence="4">
    <location>
        <begin position="47"/>
        <end position="52"/>
    </location>
</feature>
<feature type="helix" evidence="4">
    <location>
        <begin position="53"/>
        <end position="55"/>
    </location>
</feature>
<feature type="strand" evidence="4">
    <location>
        <begin position="59"/>
        <end position="65"/>
    </location>
</feature>
<feature type="helix" evidence="4">
    <location>
        <begin position="67"/>
        <end position="69"/>
    </location>
</feature>
<feature type="strand" evidence="4">
    <location>
        <begin position="71"/>
        <end position="76"/>
    </location>
</feature>
<feature type="strand" evidence="4">
    <location>
        <begin position="85"/>
        <end position="92"/>
    </location>
</feature>
<feature type="strand" evidence="4">
    <location>
        <begin position="98"/>
        <end position="101"/>
    </location>
</feature>
<feature type="helix" evidence="4">
    <location>
        <begin position="102"/>
        <end position="104"/>
    </location>
</feature>
<feature type="strand" evidence="4">
    <location>
        <begin position="106"/>
        <end position="114"/>
    </location>
</feature>
<feature type="strand" evidence="4">
    <location>
        <begin position="116"/>
        <end position="128"/>
    </location>
</feature>
<feature type="strand" evidence="4">
    <location>
        <begin position="131"/>
        <end position="144"/>
    </location>
</feature>
<feature type="helix" evidence="4">
    <location>
        <begin position="147"/>
        <end position="156"/>
    </location>
</feature>
<feature type="helix" evidence="4">
    <location>
        <begin position="157"/>
        <end position="160"/>
    </location>
</feature>
<feature type="helix" evidence="4">
    <location>
        <begin position="164"/>
        <end position="166"/>
    </location>
</feature>
<feature type="strand" evidence="4">
    <location>
        <begin position="167"/>
        <end position="169"/>
    </location>
</feature>
<evidence type="ECO:0000250" key="1"/>
<evidence type="ECO:0000255" key="2"/>
<evidence type="ECO:0000305" key="3"/>
<evidence type="ECO:0007829" key="4">
    <source>
        <dbReference type="PDB" id="2XST"/>
    </source>
</evidence>
<comment type="interaction">
    <interactant intactId="EBI-12176085">
        <id>Q6UWW0</id>
    </interactant>
    <interactant intactId="EBI-16439278">
        <id>Q6FHY5</id>
        <label>MEOX2</label>
    </interactant>
    <organismsDiffer>false</organismsDiffer>
    <experiments>3</experiments>
</comment>
<comment type="interaction">
    <interactant intactId="EBI-12176085">
        <id>Q6UWW0</id>
    </interactant>
    <interactant intactId="EBI-25492395">
        <id>PRO_0000449633</id>
        <label>rep</label>
        <dbReference type="UniProtKB" id="P0DTD1"/>
    </interactant>
    <organismsDiffer>true</organismsDiffer>
    <experiments>3</experiments>
</comment>
<comment type="subcellular location">
    <subcellularLocation>
        <location evidence="3">Secreted</location>
    </subcellularLocation>
</comment>
<comment type="similarity">
    <text evidence="3">Belongs to the calycin superfamily. Lipocalin family.</text>
</comment>
<reference key="1">
    <citation type="journal article" date="2003" name="Genome Res.">
        <title>The secreted protein discovery initiative (SPDI), a large-scale effort to identify novel human secreted and transmembrane proteins: a bioinformatics assessment.</title>
        <authorList>
            <person name="Clark H.F."/>
            <person name="Gurney A.L."/>
            <person name="Abaya E."/>
            <person name="Baker K."/>
            <person name="Baldwin D.T."/>
            <person name="Brush J."/>
            <person name="Chen J."/>
            <person name="Chow B."/>
            <person name="Chui C."/>
            <person name="Crowley C."/>
            <person name="Currell B."/>
            <person name="Deuel B."/>
            <person name="Dowd P."/>
            <person name="Eaton D."/>
            <person name="Foster J.S."/>
            <person name="Grimaldi C."/>
            <person name="Gu Q."/>
            <person name="Hass P.E."/>
            <person name="Heldens S."/>
            <person name="Huang A."/>
            <person name="Kim H.S."/>
            <person name="Klimowski L."/>
            <person name="Jin Y."/>
            <person name="Johnson S."/>
            <person name="Lee J."/>
            <person name="Lewis L."/>
            <person name="Liao D."/>
            <person name="Mark M.R."/>
            <person name="Robbie E."/>
            <person name="Sanchez C."/>
            <person name="Schoenfeld J."/>
            <person name="Seshagiri S."/>
            <person name="Simmons L."/>
            <person name="Singh J."/>
            <person name="Smith V."/>
            <person name="Stinson J."/>
            <person name="Vagts A."/>
            <person name="Vandlen R.L."/>
            <person name="Watanabe C."/>
            <person name="Wieand D."/>
            <person name="Woods K."/>
            <person name="Xie M.-H."/>
            <person name="Yansura D.G."/>
            <person name="Yi S."/>
            <person name="Yu G."/>
            <person name="Yuan J."/>
            <person name="Zhang M."/>
            <person name="Zhang Z."/>
            <person name="Goddard A.D."/>
            <person name="Wood W.I."/>
            <person name="Godowski P.J."/>
            <person name="Gray A.M."/>
        </authorList>
    </citation>
    <scope>NUCLEOTIDE SEQUENCE [LARGE SCALE MRNA]</scope>
</reference>
<reference key="2">
    <citation type="journal article" date="2004" name="Nature">
        <title>DNA sequence and analysis of human chromosome 9.</title>
        <authorList>
            <person name="Humphray S.J."/>
            <person name="Oliver K."/>
            <person name="Hunt A.R."/>
            <person name="Plumb R.W."/>
            <person name="Loveland J.E."/>
            <person name="Howe K.L."/>
            <person name="Andrews T.D."/>
            <person name="Searle S."/>
            <person name="Hunt S.E."/>
            <person name="Scott C.E."/>
            <person name="Jones M.C."/>
            <person name="Ainscough R."/>
            <person name="Almeida J.P."/>
            <person name="Ambrose K.D."/>
            <person name="Ashwell R.I.S."/>
            <person name="Babbage A.K."/>
            <person name="Babbage S."/>
            <person name="Bagguley C.L."/>
            <person name="Bailey J."/>
            <person name="Banerjee R."/>
            <person name="Barker D.J."/>
            <person name="Barlow K.F."/>
            <person name="Bates K."/>
            <person name="Beasley H."/>
            <person name="Beasley O."/>
            <person name="Bird C.P."/>
            <person name="Bray-Allen S."/>
            <person name="Brown A.J."/>
            <person name="Brown J.Y."/>
            <person name="Burford D."/>
            <person name="Burrill W."/>
            <person name="Burton J."/>
            <person name="Carder C."/>
            <person name="Carter N.P."/>
            <person name="Chapman J.C."/>
            <person name="Chen Y."/>
            <person name="Clarke G."/>
            <person name="Clark S.Y."/>
            <person name="Clee C.M."/>
            <person name="Clegg S."/>
            <person name="Collier R.E."/>
            <person name="Corby N."/>
            <person name="Crosier M."/>
            <person name="Cummings A.T."/>
            <person name="Davies J."/>
            <person name="Dhami P."/>
            <person name="Dunn M."/>
            <person name="Dutta I."/>
            <person name="Dyer L.W."/>
            <person name="Earthrowl M.E."/>
            <person name="Faulkner L."/>
            <person name="Fleming C.J."/>
            <person name="Frankish A."/>
            <person name="Frankland J.A."/>
            <person name="French L."/>
            <person name="Fricker D.G."/>
            <person name="Garner P."/>
            <person name="Garnett J."/>
            <person name="Ghori J."/>
            <person name="Gilbert J.G.R."/>
            <person name="Glison C."/>
            <person name="Grafham D.V."/>
            <person name="Gribble S."/>
            <person name="Griffiths C."/>
            <person name="Griffiths-Jones S."/>
            <person name="Grocock R."/>
            <person name="Guy J."/>
            <person name="Hall R.E."/>
            <person name="Hammond S."/>
            <person name="Harley J.L."/>
            <person name="Harrison E.S.I."/>
            <person name="Hart E.A."/>
            <person name="Heath P.D."/>
            <person name="Henderson C.D."/>
            <person name="Hopkins B.L."/>
            <person name="Howard P.J."/>
            <person name="Howden P.J."/>
            <person name="Huckle E."/>
            <person name="Johnson C."/>
            <person name="Johnson D."/>
            <person name="Joy A.A."/>
            <person name="Kay M."/>
            <person name="Keenan S."/>
            <person name="Kershaw J.K."/>
            <person name="Kimberley A.M."/>
            <person name="King A."/>
            <person name="Knights A."/>
            <person name="Laird G.K."/>
            <person name="Langford C."/>
            <person name="Lawlor S."/>
            <person name="Leongamornlert D.A."/>
            <person name="Leversha M."/>
            <person name="Lloyd C."/>
            <person name="Lloyd D.M."/>
            <person name="Lovell J."/>
            <person name="Martin S."/>
            <person name="Mashreghi-Mohammadi M."/>
            <person name="Matthews L."/>
            <person name="McLaren S."/>
            <person name="McLay K.E."/>
            <person name="McMurray A."/>
            <person name="Milne S."/>
            <person name="Nickerson T."/>
            <person name="Nisbett J."/>
            <person name="Nordsiek G."/>
            <person name="Pearce A.V."/>
            <person name="Peck A.I."/>
            <person name="Porter K.M."/>
            <person name="Pandian R."/>
            <person name="Pelan S."/>
            <person name="Phillimore B."/>
            <person name="Povey S."/>
            <person name="Ramsey Y."/>
            <person name="Rand V."/>
            <person name="Scharfe M."/>
            <person name="Sehra H.K."/>
            <person name="Shownkeen R."/>
            <person name="Sims S.K."/>
            <person name="Skuce C.D."/>
            <person name="Smith M."/>
            <person name="Steward C.A."/>
            <person name="Swarbreck D."/>
            <person name="Sycamore N."/>
            <person name="Tester J."/>
            <person name="Thorpe A."/>
            <person name="Tracey A."/>
            <person name="Tromans A."/>
            <person name="Thomas D.W."/>
            <person name="Wall M."/>
            <person name="Wallis J.M."/>
            <person name="West A.P."/>
            <person name="Whitehead S.L."/>
            <person name="Willey D.L."/>
            <person name="Williams S.A."/>
            <person name="Wilming L."/>
            <person name="Wray P.W."/>
            <person name="Young L."/>
            <person name="Ashurst J.L."/>
            <person name="Coulson A."/>
            <person name="Blocker H."/>
            <person name="Durbin R.M."/>
            <person name="Sulston J.E."/>
            <person name="Hubbard T."/>
            <person name="Jackson M.J."/>
            <person name="Bentley D.R."/>
            <person name="Beck S."/>
            <person name="Rogers J."/>
            <person name="Dunham I."/>
        </authorList>
    </citation>
    <scope>NUCLEOTIDE SEQUENCE [LARGE SCALE GENOMIC DNA]</scope>
</reference>
<reference key="3">
    <citation type="journal article" date="2004" name="Genome Res.">
        <title>The status, quality, and expansion of the NIH full-length cDNA project: the Mammalian Gene Collection (MGC).</title>
        <authorList>
            <consortium name="The MGC Project Team"/>
        </authorList>
    </citation>
    <scope>NUCLEOTIDE SEQUENCE [LARGE SCALE MRNA]</scope>
    <source>
        <tissue>Brain</tissue>
    </source>
</reference>
<reference key="4">
    <citation type="submission" date="2012-12" db="PDB data bank">
        <title>Crystal structure of the human lipocalin 15.</title>
        <authorList>
            <consortium name="Structural genomics consortium (SGC)"/>
        </authorList>
    </citation>
    <scope>X-RAY CRYSTALLOGRAPHY (1.63 ANGSTROMS) OF 19-177</scope>
</reference>
<accession>Q6UWW0</accession>
<protein>
    <recommendedName>
        <fullName>Lipocalin-15</fullName>
    </recommendedName>
</protein>
<gene>
    <name type="primary">LCN15</name>
    <name type="ORF">UNQ2541/PRO6093</name>
</gene>
<keyword id="KW-0002">3D-structure</keyword>
<keyword id="KW-1015">Disulfide bond</keyword>
<keyword id="KW-1267">Proteomics identification</keyword>
<keyword id="KW-1185">Reference proteome</keyword>
<keyword id="KW-0964">Secreted</keyword>
<keyword id="KW-0732">Signal</keyword>
<dbReference type="EMBL" id="AY358618">
    <property type="protein sequence ID" value="AAQ88981.1"/>
    <property type="molecule type" value="mRNA"/>
</dbReference>
<dbReference type="EMBL" id="AL355987">
    <property type="status" value="NOT_ANNOTATED_CDS"/>
    <property type="molecule type" value="Genomic_DNA"/>
</dbReference>
<dbReference type="EMBL" id="BC093893">
    <property type="protein sequence ID" value="AAH93893.1"/>
    <property type="molecule type" value="mRNA"/>
</dbReference>
<dbReference type="EMBL" id="BC093895">
    <property type="protein sequence ID" value="AAH93895.1"/>
    <property type="molecule type" value="mRNA"/>
</dbReference>
<dbReference type="CCDS" id="CCDS7006.1"/>
<dbReference type="RefSeq" id="NP_976222.1">
    <property type="nucleotide sequence ID" value="NM_203347.2"/>
</dbReference>
<dbReference type="PDB" id="2XST">
    <property type="method" value="X-ray"/>
    <property type="resolution" value="1.63 A"/>
    <property type="chains" value="A=19-177"/>
</dbReference>
<dbReference type="PDBsum" id="2XST"/>
<dbReference type="SMR" id="Q6UWW0"/>
<dbReference type="BioGRID" id="133279">
    <property type="interactions" value="14"/>
</dbReference>
<dbReference type="FunCoup" id="Q6UWW0">
    <property type="interactions" value="12"/>
</dbReference>
<dbReference type="IntAct" id="Q6UWW0">
    <property type="interactions" value="10"/>
</dbReference>
<dbReference type="STRING" id="9606.ENSP00000313833"/>
<dbReference type="GlyGen" id="Q6UWW0">
    <property type="glycosylation" value="2 sites, 1 O-linked glycan (2 sites)"/>
</dbReference>
<dbReference type="BioMuta" id="LCN15"/>
<dbReference type="DMDM" id="74749403"/>
<dbReference type="MassIVE" id="Q6UWW0"/>
<dbReference type="PaxDb" id="9606-ENSP00000313833"/>
<dbReference type="PeptideAtlas" id="Q6UWW0"/>
<dbReference type="ProteomicsDB" id="67531"/>
<dbReference type="Antibodypedia" id="53301">
    <property type="antibodies" value="27 antibodies from 9 providers"/>
</dbReference>
<dbReference type="DNASU" id="389812"/>
<dbReference type="Ensembl" id="ENST00000316144.6">
    <property type="protein sequence ID" value="ENSP00000313833.5"/>
    <property type="gene ID" value="ENSG00000177984.7"/>
</dbReference>
<dbReference type="GeneID" id="389812"/>
<dbReference type="KEGG" id="hsa:389812"/>
<dbReference type="MANE-Select" id="ENST00000316144.6">
    <property type="protein sequence ID" value="ENSP00000313833.5"/>
    <property type="RefSeq nucleotide sequence ID" value="NM_203347.2"/>
    <property type="RefSeq protein sequence ID" value="NP_976222.1"/>
</dbReference>
<dbReference type="UCSC" id="uc004cjd.3">
    <property type="organism name" value="human"/>
</dbReference>
<dbReference type="AGR" id="HGNC:33777"/>
<dbReference type="CTD" id="389812"/>
<dbReference type="GeneCards" id="LCN15"/>
<dbReference type="HGNC" id="HGNC:33777">
    <property type="gene designation" value="LCN15"/>
</dbReference>
<dbReference type="HPA" id="ENSG00000177984">
    <property type="expression patterns" value="Tissue enhanced (intestine, seminal vesicle)"/>
</dbReference>
<dbReference type="neXtProt" id="NX_Q6UWW0"/>
<dbReference type="OpenTargets" id="ENSG00000177984"/>
<dbReference type="PharmGKB" id="PA164722091"/>
<dbReference type="VEuPathDB" id="HostDB:ENSG00000177984"/>
<dbReference type="eggNOG" id="ENOG502S13A">
    <property type="taxonomic scope" value="Eukaryota"/>
</dbReference>
<dbReference type="GeneTree" id="ENSGT01050000244868"/>
<dbReference type="HOGENOM" id="CLU_094061_3_1_1"/>
<dbReference type="InParanoid" id="Q6UWW0"/>
<dbReference type="OMA" id="WAEVLVQ"/>
<dbReference type="OrthoDB" id="9627583at2759"/>
<dbReference type="PAN-GO" id="Q6UWW0">
    <property type="GO annotations" value="0 GO annotations based on evolutionary models"/>
</dbReference>
<dbReference type="PhylomeDB" id="Q6UWW0"/>
<dbReference type="TreeFam" id="TF336103"/>
<dbReference type="PathwayCommons" id="Q6UWW0"/>
<dbReference type="Reactome" id="R-HSA-804914">
    <property type="pathway name" value="Transport of fatty acids"/>
</dbReference>
<dbReference type="SignaLink" id="Q6UWW0"/>
<dbReference type="BioGRID-ORCS" id="389812">
    <property type="hits" value="41 hits in 1144 CRISPR screens"/>
</dbReference>
<dbReference type="EvolutionaryTrace" id="Q6UWW0"/>
<dbReference type="GenomeRNAi" id="389812"/>
<dbReference type="Pharos" id="Q6UWW0">
    <property type="development level" value="Tdark"/>
</dbReference>
<dbReference type="PRO" id="PR:Q6UWW0"/>
<dbReference type="Proteomes" id="UP000005640">
    <property type="component" value="Chromosome 9"/>
</dbReference>
<dbReference type="RNAct" id="Q6UWW0">
    <property type="molecule type" value="protein"/>
</dbReference>
<dbReference type="Bgee" id="ENSG00000177984">
    <property type="expression patterns" value="Expressed in male germ line stem cell (sensu Vertebrata) in testis and 75 other cell types or tissues"/>
</dbReference>
<dbReference type="GO" id="GO:0005576">
    <property type="term" value="C:extracellular region"/>
    <property type="evidence" value="ECO:0007669"/>
    <property type="project" value="UniProtKB-SubCell"/>
</dbReference>
<dbReference type="GO" id="GO:0036094">
    <property type="term" value="F:small molecule binding"/>
    <property type="evidence" value="ECO:0007669"/>
    <property type="project" value="InterPro"/>
</dbReference>
<dbReference type="CDD" id="cd19422">
    <property type="entry name" value="lipocalin_15-like"/>
    <property type="match status" value="1"/>
</dbReference>
<dbReference type="Gene3D" id="2.40.128.20">
    <property type="match status" value="1"/>
</dbReference>
<dbReference type="InterPro" id="IPR012674">
    <property type="entry name" value="Calycin"/>
</dbReference>
<dbReference type="InterPro" id="IPR002345">
    <property type="entry name" value="Lipocalin"/>
</dbReference>
<dbReference type="InterPro" id="IPR022272">
    <property type="entry name" value="Lipocalin_CS"/>
</dbReference>
<dbReference type="InterPro" id="IPR000566">
    <property type="entry name" value="Lipocln_cytosolic_FA-bd_dom"/>
</dbReference>
<dbReference type="PANTHER" id="PTHR11430">
    <property type="entry name" value="LIPOCALIN"/>
    <property type="match status" value="1"/>
</dbReference>
<dbReference type="PANTHER" id="PTHR11430:SF64">
    <property type="entry name" value="LIPOCALIN-15"/>
    <property type="match status" value="1"/>
</dbReference>
<dbReference type="Pfam" id="PF00061">
    <property type="entry name" value="Lipocalin"/>
    <property type="match status" value="1"/>
</dbReference>
<dbReference type="PRINTS" id="PR00179">
    <property type="entry name" value="LIPOCALIN"/>
</dbReference>
<dbReference type="PRINTS" id="PR01254">
    <property type="entry name" value="PGNDSYNTHASE"/>
</dbReference>
<dbReference type="SUPFAM" id="SSF50814">
    <property type="entry name" value="Lipocalins"/>
    <property type="match status" value="1"/>
</dbReference>
<dbReference type="PROSITE" id="PS00213">
    <property type="entry name" value="LIPOCALIN"/>
    <property type="match status" value="1"/>
</dbReference>
<sequence>MMSFLLGAILTLLWAPTAQAEVLLQPDFNAEKFSGLWYVVSMASDCRVFLGKKDHLSMSTRAIRPTEEGGLHVHMEFPGADGCNQVDAEYLKVGSEGHFRVPALGYLDVRIVDTDYSSFAVLYIYKELEGALSTMVQLYSRTQDVSPQALKSFQDFYPTLGLPKDMMVMLPQSDACNPESKEAP</sequence>
<name>LCN15_HUMAN</name>